<evidence type="ECO:0000255" key="1">
    <source>
        <dbReference type="PROSITE-ProRule" id="PRU00434"/>
    </source>
</evidence>
<evidence type="ECO:0000305" key="2"/>
<protein>
    <recommendedName>
        <fullName>High-affinity branched-chain amino acid transport ATP-binding protein LivF</fullName>
    </recommendedName>
    <alternativeName>
        <fullName>LIV-I protein F</fullName>
    </alternativeName>
</protein>
<organism>
    <name type="scientific">Escherichia coli (strain K12)</name>
    <dbReference type="NCBI Taxonomy" id="83333"/>
    <lineage>
        <taxon>Bacteria</taxon>
        <taxon>Pseudomonadati</taxon>
        <taxon>Pseudomonadota</taxon>
        <taxon>Gammaproteobacteria</taxon>
        <taxon>Enterobacterales</taxon>
        <taxon>Enterobacteriaceae</taxon>
        <taxon>Escherichia</taxon>
    </lineage>
</organism>
<dbReference type="EMBL" id="J05516">
    <property type="protein sequence ID" value="AAA83887.1"/>
    <property type="molecule type" value="Genomic_DNA"/>
</dbReference>
<dbReference type="EMBL" id="U00039">
    <property type="protein sequence ID" value="AAB18429.1"/>
    <property type="status" value="ALT_INIT"/>
    <property type="molecule type" value="Genomic_DNA"/>
</dbReference>
<dbReference type="EMBL" id="U00096">
    <property type="protein sequence ID" value="AAC76479.2"/>
    <property type="molecule type" value="Genomic_DNA"/>
</dbReference>
<dbReference type="EMBL" id="AP009048">
    <property type="protein sequence ID" value="BAE77839.1"/>
    <property type="molecule type" value="Genomic_DNA"/>
</dbReference>
<dbReference type="PIR" id="S47673">
    <property type="entry name" value="S47673"/>
</dbReference>
<dbReference type="RefSeq" id="NP_417911.4">
    <property type="nucleotide sequence ID" value="NC_000913.3"/>
</dbReference>
<dbReference type="RefSeq" id="WP_000416891.1">
    <property type="nucleotide sequence ID" value="NZ_SSZK01000008.1"/>
</dbReference>
<dbReference type="SMR" id="P22731"/>
<dbReference type="BioGRID" id="4261110">
    <property type="interactions" value="30"/>
</dbReference>
<dbReference type="BioGRID" id="852270">
    <property type="interactions" value="2"/>
</dbReference>
<dbReference type="ComplexPortal" id="CPX-4316">
    <property type="entry name" value="Branched chain amino acid ABC transporter complex"/>
</dbReference>
<dbReference type="ComplexPortal" id="CPX-4317">
    <property type="entry name" value="Branched chain amino acid, leucine-specific ABC transporter complex"/>
</dbReference>
<dbReference type="FunCoup" id="P22731">
    <property type="interactions" value="375"/>
</dbReference>
<dbReference type="IntAct" id="P22731">
    <property type="interactions" value="13"/>
</dbReference>
<dbReference type="STRING" id="511145.b3454"/>
<dbReference type="TCDB" id="3.A.1.4.1">
    <property type="family name" value="the atp-binding cassette (abc) superfamily"/>
</dbReference>
<dbReference type="PaxDb" id="511145-b3454"/>
<dbReference type="EnsemblBacteria" id="AAC76479">
    <property type="protein sequence ID" value="AAC76479"/>
    <property type="gene ID" value="b3454"/>
</dbReference>
<dbReference type="GeneID" id="86948307"/>
<dbReference type="GeneID" id="947961"/>
<dbReference type="KEGG" id="ecj:JW3419"/>
<dbReference type="KEGG" id="eco:b3454"/>
<dbReference type="PATRIC" id="fig|511145.12.peg.3552"/>
<dbReference type="EchoBASE" id="EB0531"/>
<dbReference type="eggNOG" id="COG0410">
    <property type="taxonomic scope" value="Bacteria"/>
</dbReference>
<dbReference type="HOGENOM" id="CLU_000604_1_2_6"/>
<dbReference type="InParanoid" id="P22731"/>
<dbReference type="OMA" id="IMMQKIM"/>
<dbReference type="OrthoDB" id="9776369at2"/>
<dbReference type="PhylomeDB" id="P22731"/>
<dbReference type="BioCyc" id="EcoCyc:LIVF-MONOMER"/>
<dbReference type="BioCyc" id="MetaCyc:LIVF-MONOMER"/>
<dbReference type="PRO" id="PR:P22731"/>
<dbReference type="Proteomes" id="UP000000625">
    <property type="component" value="Chromosome"/>
</dbReference>
<dbReference type="GO" id="GO:0055052">
    <property type="term" value="C:ATP-binding cassette (ABC) transporter complex, substrate-binding subunit-containing"/>
    <property type="evidence" value="ECO:0000303"/>
    <property type="project" value="ComplexPortal"/>
</dbReference>
<dbReference type="GO" id="GO:0016020">
    <property type="term" value="C:membrane"/>
    <property type="evidence" value="ECO:0000303"/>
    <property type="project" value="ComplexPortal"/>
</dbReference>
<dbReference type="GO" id="GO:0005524">
    <property type="term" value="F:ATP binding"/>
    <property type="evidence" value="ECO:0000255"/>
    <property type="project" value="EcoCyc"/>
</dbReference>
<dbReference type="GO" id="GO:0016887">
    <property type="term" value="F:ATP hydrolysis activity"/>
    <property type="evidence" value="ECO:0007669"/>
    <property type="project" value="InterPro"/>
</dbReference>
<dbReference type="GO" id="GO:0015658">
    <property type="term" value="F:branched-chain amino acid transmembrane transporter activity"/>
    <property type="evidence" value="ECO:0000314"/>
    <property type="project" value="EcoCyc"/>
</dbReference>
<dbReference type="GO" id="GO:0015188">
    <property type="term" value="F:L-isoleucine transmembrane transporter activity"/>
    <property type="evidence" value="ECO:0000314"/>
    <property type="project" value="EcoCyc"/>
</dbReference>
<dbReference type="GO" id="GO:0015190">
    <property type="term" value="F:L-leucine transmembrane transporter activity"/>
    <property type="evidence" value="ECO:0000269"/>
    <property type="project" value="EcoCyc"/>
</dbReference>
<dbReference type="GO" id="GO:0005304">
    <property type="term" value="F:L-valine transmembrane transporter activity"/>
    <property type="evidence" value="ECO:0000314"/>
    <property type="project" value="EcoCyc"/>
</dbReference>
<dbReference type="GO" id="GO:0015803">
    <property type="term" value="P:branched-chain amino acid transport"/>
    <property type="evidence" value="ECO:0000314"/>
    <property type="project" value="EcoCyc"/>
</dbReference>
<dbReference type="GO" id="GO:1903714">
    <property type="term" value="P:isoleucine transmembrane transport"/>
    <property type="evidence" value="ECO:0000314"/>
    <property type="project" value="EcoCyc"/>
</dbReference>
<dbReference type="GO" id="GO:0015807">
    <property type="term" value="P:L-amino acid transport"/>
    <property type="evidence" value="ECO:0000318"/>
    <property type="project" value="GO_Central"/>
</dbReference>
<dbReference type="GO" id="GO:1903785">
    <property type="term" value="P:L-valine transmembrane transport"/>
    <property type="evidence" value="ECO:0000314"/>
    <property type="project" value="EcoCyc"/>
</dbReference>
<dbReference type="GO" id="GO:0015823">
    <property type="term" value="P:phenylalanine transport"/>
    <property type="evidence" value="ECO:0000314"/>
    <property type="project" value="EcoCyc"/>
</dbReference>
<dbReference type="CDD" id="cd03224">
    <property type="entry name" value="ABC_TM1139_LivF_branched"/>
    <property type="match status" value="1"/>
</dbReference>
<dbReference type="FunFam" id="3.40.50.300:FF:000341">
    <property type="entry name" value="High-affinity branched-chain amino acid transport ATP-binding protein"/>
    <property type="match status" value="1"/>
</dbReference>
<dbReference type="Gene3D" id="3.40.50.300">
    <property type="entry name" value="P-loop containing nucleotide triphosphate hydrolases"/>
    <property type="match status" value="1"/>
</dbReference>
<dbReference type="InterPro" id="IPR003593">
    <property type="entry name" value="AAA+_ATPase"/>
</dbReference>
<dbReference type="InterPro" id="IPR030660">
    <property type="entry name" value="ABC_branched_ATPase_LivF/BraG"/>
</dbReference>
<dbReference type="InterPro" id="IPR003439">
    <property type="entry name" value="ABC_transporter-like_ATP-bd"/>
</dbReference>
<dbReference type="InterPro" id="IPR017871">
    <property type="entry name" value="ABC_transporter-like_CS"/>
</dbReference>
<dbReference type="InterPro" id="IPR052156">
    <property type="entry name" value="BCAA_Transport_ATP-bd_LivF"/>
</dbReference>
<dbReference type="InterPro" id="IPR027417">
    <property type="entry name" value="P-loop_NTPase"/>
</dbReference>
<dbReference type="NCBIfam" id="NF008626">
    <property type="entry name" value="PRK11614.1"/>
    <property type="match status" value="1"/>
</dbReference>
<dbReference type="PANTHER" id="PTHR43820">
    <property type="entry name" value="HIGH-AFFINITY BRANCHED-CHAIN AMINO ACID TRANSPORT ATP-BINDING PROTEIN LIVF"/>
    <property type="match status" value="1"/>
</dbReference>
<dbReference type="PANTHER" id="PTHR43820:SF4">
    <property type="entry name" value="HIGH-AFFINITY BRANCHED-CHAIN AMINO ACID TRANSPORT ATP-BINDING PROTEIN LIVF"/>
    <property type="match status" value="1"/>
</dbReference>
<dbReference type="Pfam" id="PF00005">
    <property type="entry name" value="ABC_tran"/>
    <property type="match status" value="1"/>
</dbReference>
<dbReference type="PIRSF" id="PIRSF039137">
    <property type="entry name" value="ABC_branched_ATPase"/>
    <property type="match status" value="1"/>
</dbReference>
<dbReference type="SMART" id="SM00382">
    <property type="entry name" value="AAA"/>
    <property type="match status" value="1"/>
</dbReference>
<dbReference type="SUPFAM" id="SSF52540">
    <property type="entry name" value="P-loop containing nucleoside triphosphate hydrolases"/>
    <property type="match status" value="1"/>
</dbReference>
<dbReference type="PROSITE" id="PS00211">
    <property type="entry name" value="ABC_TRANSPORTER_1"/>
    <property type="match status" value="1"/>
</dbReference>
<dbReference type="PROSITE" id="PS50893">
    <property type="entry name" value="ABC_TRANSPORTER_2"/>
    <property type="match status" value="1"/>
</dbReference>
<gene>
    <name type="primary">livF</name>
    <name type="ordered locus">b3454</name>
    <name type="ordered locus">JW3419</name>
</gene>
<proteinExistence type="evidence at protein level"/>
<name>LIVF_ECOLI</name>
<accession>P22731</accession>
<accession>P76697</accession>
<accession>Q2M7B7</accession>
<sequence length="237" mass="26310">MEKVMLSFDKVSAHYGKIQALHEVSLHINQGEIVTLIGANGAGKTTLLGTLCGDPRATSGRIVFDDKDITDWQTAKIMREAVAIVPEGRRVFSRMTVEENLAMGGFFAERDQFQERIKWVYELFPRLHERRIQRAGTMSGGEQQMLAIGRALMSNPRLLLLDEPSLGLAPIIIQQIFDTIEQLREQGMTIFLVEQNANQALKLADRGYVLENGHVVLSDTGDALLANEAVRSAYLGG</sequence>
<reference key="1">
    <citation type="journal article" date="1990" name="J. Biol. Chem.">
        <title>Nucleotide sequence and genetic characterization reveal six essential genes for the LIV-I and LS transport systems of Escherichia coli.</title>
        <authorList>
            <person name="Adams M.D."/>
            <person name="Wagner L.M."/>
            <person name="Graddis T.J."/>
            <person name="Landick R."/>
            <person name="Antonucci T.K."/>
            <person name="Gibson A.L."/>
            <person name="Oxender D.L."/>
        </authorList>
    </citation>
    <scope>NUCLEOTIDE SEQUENCE [GENOMIC DNA]</scope>
</reference>
<reference key="2">
    <citation type="journal article" date="1994" name="Nucleic Acids Res.">
        <title>Analysis of the Escherichia coli genome. V. DNA sequence of the region from 76.0 to 81.5 minutes.</title>
        <authorList>
            <person name="Sofia H.J."/>
            <person name="Burland V."/>
            <person name="Daniels D.L."/>
            <person name="Plunkett G. III"/>
            <person name="Blattner F.R."/>
        </authorList>
    </citation>
    <scope>NUCLEOTIDE SEQUENCE [LARGE SCALE GENOMIC DNA]</scope>
    <source>
        <strain>K12 / MG1655 / ATCC 47076</strain>
    </source>
</reference>
<reference key="3">
    <citation type="journal article" date="1997" name="Science">
        <title>The complete genome sequence of Escherichia coli K-12.</title>
        <authorList>
            <person name="Blattner F.R."/>
            <person name="Plunkett G. III"/>
            <person name="Bloch C.A."/>
            <person name="Perna N.T."/>
            <person name="Burland V."/>
            <person name="Riley M."/>
            <person name="Collado-Vides J."/>
            <person name="Glasner J.D."/>
            <person name="Rode C.K."/>
            <person name="Mayhew G.F."/>
            <person name="Gregor J."/>
            <person name="Davis N.W."/>
            <person name="Kirkpatrick H.A."/>
            <person name="Goeden M.A."/>
            <person name="Rose D.J."/>
            <person name="Mau B."/>
            <person name="Shao Y."/>
        </authorList>
    </citation>
    <scope>NUCLEOTIDE SEQUENCE [LARGE SCALE GENOMIC DNA]</scope>
    <source>
        <strain>K12 / MG1655 / ATCC 47076</strain>
    </source>
</reference>
<reference key="4">
    <citation type="journal article" date="2006" name="Mol. Syst. Biol.">
        <title>Highly accurate genome sequences of Escherichia coli K-12 strains MG1655 and W3110.</title>
        <authorList>
            <person name="Hayashi K."/>
            <person name="Morooka N."/>
            <person name="Yamamoto Y."/>
            <person name="Fujita K."/>
            <person name="Isono K."/>
            <person name="Choi S."/>
            <person name="Ohtsubo E."/>
            <person name="Baba T."/>
            <person name="Wanner B.L."/>
            <person name="Mori H."/>
            <person name="Horiuchi T."/>
        </authorList>
    </citation>
    <scope>NUCLEOTIDE SEQUENCE [LARGE SCALE GENOMIC DNA]</scope>
    <source>
        <strain>K12 / W3110 / ATCC 27325 / DSM 5911</strain>
    </source>
</reference>
<reference key="5">
    <citation type="journal article" date="1997" name="Electrophoresis">
        <title>Escherichia coli proteome analysis using the gene-protein database.</title>
        <authorList>
            <person name="VanBogelen R.A."/>
            <person name="Abshire K.Z."/>
            <person name="Moldover B."/>
            <person name="Olson E.R."/>
            <person name="Neidhardt F.C."/>
        </authorList>
    </citation>
    <scope>IDENTIFICATION BY 2D-GEL</scope>
</reference>
<comment type="function">
    <text>Component of the leucine-specific transport system.</text>
</comment>
<comment type="similarity">
    <text evidence="2">Belongs to the ABC transporter superfamily.</text>
</comment>
<comment type="sequence caution" evidence="2">
    <conflict type="erroneous initiation">
        <sequence resource="EMBL-CDS" id="AAB18429"/>
    </conflict>
    <text>Extended N-terminus.</text>
</comment>
<feature type="chain" id="PRO_0000092401" description="High-affinity branched-chain amino acid transport ATP-binding protein LivF">
    <location>
        <begin position="1"/>
        <end position="237"/>
    </location>
</feature>
<feature type="domain" description="ABC transporter" evidence="1">
    <location>
        <begin position="6"/>
        <end position="237"/>
    </location>
</feature>
<feature type="binding site" evidence="1">
    <location>
        <begin position="38"/>
        <end position="45"/>
    </location>
    <ligand>
        <name>ATP</name>
        <dbReference type="ChEBI" id="CHEBI:30616"/>
    </ligand>
</feature>
<feature type="sequence conflict" description="In Ref. 1; AAA83887." evidence="2" ref="1">
    <original>R</original>
    <variation>G</variation>
    <location>
        <position position="56"/>
    </location>
</feature>
<feature type="sequence conflict" description="In Ref. 1; AAA83887." evidence="2" ref="1">
    <original>V</original>
    <variation>A</variation>
    <location>
        <position position="120"/>
    </location>
</feature>
<feature type="sequence conflict" description="In Ref. 1; AAA83887." evidence="2" ref="1">
    <original>A</original>
    <variation>G</variation>
    <location>
        <position position="200"/>
    </location>
</feature>
<keyword id="KW-0029">Amino-acid transport</keyword>
<keyword id="KW-0067">ATP-binding</keyword>
<keyword id="KW-0547">Nucleotide-binding</keyword>
<keyword id="KW-1185">Reference proteome</keyword>
<keyword id="KW-0813">Transport</keyword>